<evidence type="ECO:0000255" key="1">
    <source>
        <dbReference type="HAMAP-Rule" id="MF_00207"/>
    </source>
</evidence>
<sequence length="311" mass="33523">MSKILVFGHQNPDSDAIGSSYAFAYLAREAYGLDTEVVALGEPNEETAFVLDYFGVAAPRVITSAKAEGAEQVILTDHNEFQQSVADIAEVEVYGVVDHHRVANFETASPLYMRLEPVGSASSIVYRMFKEHGVEVPKEIAGLMLSGLISDTLLLKSPTTHPTDKVIAPELAELAGVNLEEYGLAMLKAGTNLASKSAEELIDIDAKTFELNGNNVRVAQVNTVDIAEVLERQAEIEAAIEKAIADNGYSDFVLMITDIINSNSEILAIGSNMDKVEAAFNFVLENNHAFLAGAVSRKKQVVPQLTASFSA</sequence>
<keyword id="KW-0963">Cytoplasm</keyword>
<keyword id="KW-0378">Hydrolase</keyword>
<keyword id="KW-0464">Manganese</keyword>
<keyword id="KW-0479">Metal-binding</keyword>
<keyword id="KW-1185">Reference proteome</keyword>
<organism>
    <name type="scientific">Streptococcus sanguinis (strain SK36)</name>
    <dbReference type="NCBI Taxonomy" id="388919"/>
    <lineage>
        <taxon>Bacteria</taxon>
        <taxon>Bacillati</taxon>
        <taxon>Bacillota</taxon>
        <taxon>Bacilli</taxon>
        <taxon>Lactobacillales</taxon>
        <taxon>Streptococcaceae</taxon>
        <taxon>Streptococcus</taxon>
    </lineage>
</organism>
<name>PPAC_STRSV</name>
<dbReference type="EC" id="3.6.1.1" evidence="1"/>
<dbReference type="EMBL" id="CP000387">
    <property type="protein sequence ID" value="ABN45130.1"/>
    <property type="molecule type" value="Genomic_DNA"/>
</dbReference>
<dbReference type="RefSeq" id="WP_011837329.1">
    <property type="nucleotide sequence ID" value="NC_009009.1"/>
</dbReference>
<dbReference type="RefSeq" id="YP_001035680.1">
    <property type="nucleotide sequence ID" value="NC_009009.1"/>
</dbReference>
<dbReference type="SMR" id="A3CPM5"/>
<dbReference type="STRING" id="388919.SSA_1748"/>
<dbReference type="KEGG" id="ssa:SSA_1748"/>
<dbReference type="PATRIC" id="fig|388919.9.peg.1656"/>
<dbReference type="eggNOG" id="COG1227">
    <property type="taxonomic scope" value="Bacteria"/>
</dbReference>
<dbReference type="HOGENOM" id="CLU_025243_0_1_9"/>
<dbReference type="OrthoDB" id="9766150at2"/>
<dbReference type="Proteomes" id="UP000002148">
    <property type="component" value="Chromosome"/>
</dbReference>
<dbReference type="GO" id="GO:0005737">
    <property type="term" value="C:cytoplasm"/>
    <property type="evidence" value="ECO:0007669"/>
    <property type="project" value="UniProtKB-SubCell"/>
</dbReference>
<dbReference type="GO" id="GO:0004427">
    <property type="term" value="F:inorganic diphosphate phosphatase activity"/>
    <property type="evidence" value="ECO:0007669"/>
    <property type="project" value="UniProtKB-UniRule"/>
</dbReference>
<dbReference type="GO" id="GO:0030145">
    <property type="term" value="F:manganese ion binding"/>
    <property type="evidence" value="ECO:0007669"/>
    <property type="project" value="UniProtKB-UniRule"/>
</dbReference>
<dbReference type="FunFam" id="3.10.310.20:FF:000001">
    <property type="entry name" value="Probable manganese-dependent inorganic pyrophosphatase"/>
    <property type="match status" value="1"/>
</dbReference>
<dbReference type="FunFam" id="3.90.1640.10:FF:000001">
    <property type="entry name" value="Probable manganese-dependent inorganic pyrophosphatase"/>
    <property type="match status" value="1"/>
</dbReference>
<dbReference type="Gene3D" id="3.10.310.20">
    <property type="entry name" value="DHHA2 domain"/>
    <property type="match status" value="1"/>
</dbReference>
<dbReference type="Gene3D" id="3.90.1640.10">
    <property type="entry name" value="inorganic pyrophosphatase (n-terminal core)"/>
    <property type="match status" value="1"/>
</dbReference>
<dbReference type="HAMAP" id="MF_00207">
    <property type="entry name" value="PPase_C"/>
    <property type="match status" value="1"/>
</dbReference>
<dbReference type="InterPro" id="IPR001667">
    <property type="entry name" value="DDH_dom"/>
</dbReference>
<dbReference type="InterPro" id="IPR038763">
    <property type="entry name" value="DHH_sf"/>
</dbReference>
<dbReference type="InterPro" id="IPR004097">
    <property type="entry name" value="DHHA2"/>
</dbReference>
<dbReference type="InterPro" id="IPR038222">
    <property type="entry name" value="DHHA2_dom_sf"/>
</dbReference>
<dbReference type="InterPro" id="IPR022934">
    <property type="entry name" value="Mn-dep_inorganic_PyrPase"/>
</dbReference>
<dbReference type="InterPro" id="IPR051319">
    <property type="entry name" value="Oligoribo/pAp-PDE_c-di-AMP_PDE"/>
</dbReference>
<dbReference type="NCBIfam" id="NF003877">
    <property type="entry name" value="PRK05427.1"/>
    <property type="match status" value="1"/>
</dbReference>
<dbReference type="PANTHER" id="PTHR47618">
    <property type="entry name" value="BIFUNCTIONAL OLIGORIBONUCLEASE AND PAP PHOSPHATASE NRNA"/>
    <property type="match status" value="1"/>
</dbReference>
<dbReference type="PANTHER" id="PTHR47618:SF1">
    <property type="entry name" value="BIFUNCTIONAL OLIGORIBONUCLEASE AND PAP PHOSPHATASE NRNA"/>
    <property type="match status" value="1"/>
</dbReference>
<dbReference type="Pfam" id="PF01368">
    <property type="entry name" value="DHH"/>
    <property type="match status" value="1"/>
</dbReference>
<dbReference type="Pfam" id="PF02833">
    <property type="entry name" value="DHHA2"/>
    <property type="match status" value="1"/>
</dbReference>
<dbReference type="SMART" id="SM01131">
    <property type="entry name" value="DHHA2"/>
    <property type="match status" value="1"/>
</dbReference>
<dbReference type="SUPFAM" id="SSF64182">
    <property type="entry name" value="DHH phosphoesterases"/>
    <property type="match status" value="1"/>
</dbReference>
<gene>
    <name evidence="1" type="primary">ppaC</name>
    <name type="ordered locus">SSA_1748</name>
</gene>
<accession>A3CPM5</accession>
<feature type="chain" id="PRO_1000012328" description="Probable manganese-dependent inorganic pyrophosphatase">
    <location>
        <begin position="1"/>
        <end position="311"/>
    </location>
</feature>
<feature type="binding site" evidence="1">
    <location>
        <position position="9"/>
    </location>
    <ligand>
        <name>Mn(2+)</name>
        <dbReference type="ChEBI" id="CHEBI:29035"/>
        <label>1</label>
    </ligand>
</feature>
<feature type="binding site" evidence="1">
    <location>
        <position position="13"/>
    </location>
    <ligand>
        <name>Mn(2+)</name>
        <dbReference type="ChEBI" id="CHEBI:29035"/>
        <label>1</label>
    </ligand>
</feature>
<feature type="binding site" evidence="1">
    <location>
        <position position="15"/>
    </location>
    <ligand>
        <name>Mn(2+)</name>
        <dbReference type="ChEBI" id="CHEBI:29035"/>
        <label>2</label>
    </ligand>
</feature>
<feature type="binding site" evidence="1">
    <location>
        <position position="77"/>
    </location>
    <ligand>
        <name>Mn(2+)</name>
        <dbReference type="ChEBI" id="CHEBI:29035"/>
        <label>1</label>
    </ligand>
</feature>
<feature type="binding site" evidence="1">
    <location>
        <position position="77"/>
    </location>
    <ligand>
        <name>Mn(2+)</name>
        <dbReference type="ChEBI" id="CHEBI:29035"/>
        <label>2</label>
    </ligand>
</feature>
<feature type="binding site" evidence="1">
    <location>
        <position position="99"/>
    </location>
    <ligand>
        <name>Mn(2+)</name>
        <dbReference type="ChEBI" id="CHEBI:29035"/>
        <label>2</label>
    </ligand>
</feature>
<feature type="binding site" evidence="1">
    <location>
        <position position="151"/>
    </location>
    <ligand>
        <name>Mn(2+)</name>
        <dbReference type="ChEBI" id="CHEBI:29035"/>
        <label>2</label>
    </ligand>
</feature>
<reference key="1">
    <citation type="journal article" date="2007" name="J. Bacteriol.">
        <title>Genome of the opportunistic pathogen Streptococcus sanguinis.</title>
        <authorList>
            <person name="Xu P."/>
            <person name="Alves J.M."/>
            <person name="Kitten T."/>
            <person name="Brown A."/>
            <person name="Chen Z."/>
            <person name="Ozaki L.S."/>
            <person name="Manque P."/>
            <person name="Ge X."/>
            <person name="Serrano M.G."/>
            <person name="Puiu D."/>
            <person name="Hendricks S."/>
            <person name="Wang Y."/>
            <person name="Chaplin M.D."/>
            <person name="Akan D."/>
            <person name="Paik S."/>
            <person name="Peterson D.L."/>
            <person name="Macrina F.L."/>
            <person name="Buck G.A."/>
        </authorList>
    </citation>
    <scope>NUCLEOTIDE SEQUENCE [LARGE SCALE GENOMIC DNA]</scope>
    <source>
        <strain>SK36</strain>
    </source>
</reference>
<proteinExistence type="inferred from homology"/>
<protein>
    <recommendedName>
        <fullName evidence="1">Probable manganese-dependent inorganic pyrophosphatase</fullName>
        <ecNumber evidence="1">3.6.1.1</ecNumber>
    </recommendedName>
    <alternativeName>
        <fullName evidence="1">Pyrophosphate phospho-hydrolase</fullName>
        <shortName evidence="1">PPase</shortName>
    </alternativeName>
</protein>
<comment type="catalytic activity">
    <reaction evidence="1">
        <text>diphosphate + H2O = 2 phosphate + H(+)</text>
        <dbReference type="Rhea" id="RHEA:24576"/>
        <dbReference type="ChEBI" id="CHEBI:15377"/>
        <dbReference type="ChEBI" id="CHEBI:15378"/>
        <dbReference type="ChEBI" id="CHEBI:33019"/>
        <dbReference type="ChEBI" id="CHEBI:43474"/>
        <dbReference type="EC" id="3.6.1.1"/>
    </reaction>
</comment>
<comment type="cofactor">
    <cofactor evidence="1">
        <name>Mn(2+)</name>
        <dbReference type="ChEBI" id="CHEBI:29035"/>
    </cofactor>
    <text evidence="1">Binds 2 manganese ions per subunit.</text>
</comment>
<comment type="subcellular location">
    <subcellularLocation>
        <location evidence="1">Cytoplasm</location>
    </subcellularLocation>
</comment>
<comment type="similarity">
    <text evidence="1">Belongs to the PPase class C family.</text>
</comment>